<name>PSBC_CHLSC</name>
<comment type="function">
    <text evidence="1">One of the components of the core complex of photosystem II (PSII). It binds chlorophyll and helps catalyze the primary light-induced photochemical processes of PSII. PSII is a light-driven water:plastoquinone oxidoreductase, using light energy to abstract electrons from H(2)O, generating O(2) and a proton gradient subsequently used for ATP formation.</text>
</comment>
<comment type="cofactor">
    <text evidence="1">Binds multiple chlorophylls and provides some of the ligands for the Ca-4Mn-5O cluster of the oxygen-evolving complex. It may also provide a ligand for a Cl- that is required for oxygen evolution. PSII binds additional chlorophylls, carotenoids and specific lipids.</text>
</comment>
<comment type="subunit">
    <text evidence="1">PSII is composed of 1 copy each of membrane proteins PsbA, PsbB, PsbC, PsbD, PsbE, PsbF, PsbH, PsbI, PsbJ, PsbK, PsbL, PsbM, PsbT, PsbX, PsbY, PsbZ, Psb30/Ycf12, at least 3 peripheral proteins of the oxygen-evolving complex and a large number of cofactors. It forms dimeric complexes.</text>
</comment>
<comment type="subcellular location">
    <subcellularLocation>
        <location evidence="1">Plastid</location>
        <location evidence="1">Chloroplast thylakoid membrane</location>
        <topology evidence="1">Multi-pass membrane protein</topology>
    </subcellularLocation>
</comment>
<comment type="similarity">
    <text evidence="1">Belongs to the PsbB/PsbC family. PsbC subfamily.</text>
</comment>
<sequence>MKTLYSLRRFYHVETLFNGTLALAGRDQETTGFAWWAGNARLINLSGKLLGAHVAHAGLIVFWAGAMNLFEVAHFVPEKPMYEQGLILLPHLATLGWGVGPGGEVIDTFPYFVSGVLHLISSAVLGFGGIYHALLGPETLEESFPFFGYVWKDRNKMTTILGIHLILLGIGAFLLVLKALYFGGVYDTWAPGGGDVRKITNLTLSPSVIFGYSLKSPFGGEGWIVSVDDLEDIIGGHVWLGSICILGGIWHILTKPFAWARRAFVWSGEAYLSYSLGALSVFGFIACCFVWFNNTAYPSEFYGPTGPEASQAQAFTFLVRDQRLGANVGSAQGPTGLGKYLMRSPTGEVIFGGETMRFWDLRAPWLEPLRGPNGLDLSRLKKDIQPWQERRSAEYMTHAPLGSLNSVGGVATEINAVNYVSPRSWLATSHFVLGFFLFVGHLWHAGRARAAAAGFEKGIDRDFEPVLSMTPLN</sequence>
<evidence type="ECO:0000255" key="1">
    <source>
        <dbReference type="HAMAP-Rule" id="MF_01496"/>
    </source>
</evidence>
<gene>
    <name evidence="1" type="primary">psbC</name>
</gene>
<reference key="1">
    <citation type="journal article" date="2007" name="Mol. Phylogenet. Evol.">
        <title>Phylogenetic and evolutionary implications of complete chloroplast genome sequences of four early-diverging angiosperms: Buxus (Buxaceae), Chloranthus (Chloranthaceae), Dioscorea (Dioscoreaceae), and Illicium (Schisandraceae).</title>
        <authorList>
            <person name="Hansen D.R."/>
            <person name="Dastidar S.G."/>
            <person name="Cai Z."/>
            <person name="Penaflor C."/>
            <person name="Kuehl J.V."/>
            <person name="Boore J.L."/>
            <person name="Jansen R.K."/>
        </authorList>
    </citation>
    <scope>NUCLEOTIDE SEQUENCE [LARGE SCALE GENOMIC DNA]</scope>
</reference>
<protein>
    <recommendedName>
        <fullName evidence="1">Photosystem II CP43 reaction center protein</fullName>
    </recommendedName>
    <alternativeName>
        <fullName evidence="1">PSII 43 kDa protein</fullName>
    </alternativeName>
    <alternativeName>
        <fullName evidence="1">Protein CP-43</fullName>
    </alternativeName>
</protein>
<organism>
    <name type="scientific">Chloranthus spicatus</name>
    <name type="common">Chulantree</name>
    <name type="synonym">Nigrina spicata</name>
    <dbReference type="NCBI Taxonomy" id="13006"/>
    <lineage>
        <taxon>Eukaryota</taxon>
        <taxon>Viridiplantae</taxon>
        <taxon>Streptophyta</taxon>
        <taxon>Embryophyta</taxon>
        <taxon>Tracheophyta</taxon>
        <taxon>Spermatophyta</taxon>
        <taxon>Magnoliopsida</taxon>
        <taxon>Chloranthales</taxon>
        <taxon>Chloranthaceae</taxon>
        <taxon>Chloranthus</taxon>
    </lineage>
</organism>
<accession>A6MMB8</accession>
<geneLocation type="chloroplast"/>
<proteinExistence type="inferred from homology"/>
<keyword id="KW-0007">Acetylation</keyword>
<keyword id="KW-0148">Chlorophyll</keyword>
<keyword id="KW-0150">Chloroplast</keyword>
<keyword id="KW-0157">Chromophore</keyword>
<keyword id="KW-0464">Manganese</keyword>
<keyword id="KW-0472">Membrane</keyword>
<keyword id="KW-0479">Metal-binding</keyword>
<keyword id="KW-0597">Phosphoprotein</keyword>
<keyword id="KW-0602">Photosynthesis</keyword>
<keyword id="KW-0604">Photosystem II</keyword>
<keyword id="KW-0934">Plastid</keyword>
<keyword id="KW-0793">Thylakoid</keyword>
<keyword id="KW-0812">Transmembrane</keyword>
<keyword id="KW-1133">Transmembrane helix</keyword>
<feature type="propeptide" id="PRO_0000431125" evidence="1">
    <location>
        <begin position="1"/>
        <end position="14"/>
    </location>
</feature>
<feature type="chain" id="PRO_0000361345" description="Photosystem II CP43 reaction center protein" evidence="1">
    <location>
        <begin position="15"/>
        <end position="473"/>
    </location>
</feature>
<feature type="transmembrane region" description="Helical" evidence="1">
    <location>
        <begin position="69"/>
        <end position="93"/>
    </location>
</feature>
<feature type="transmembrane region" description="Helical" evidence="1">
    <location>
        <begin position="134"/>
        <end position="155"/>
    </location>
</feature>
<feature type="transmembrane region" description="Helical" evidence="1">
    <location>
        <begin position="178"/>
        <end position="200"/>
    </location>
</feature>
<feature type="transmembrane region" description="Helical" evidence="1">
    <location>
        <begin position="255"/>
        <end position="275"/>
    </location>
</feature>
<feature type="transmembrane region" description="Helical" evidence="1">
    <location>
        <begin position="291"/>
        <end position="312"/>
    </location>
</feature>
<feature type="transmembrane region" description="Helical" evidence="1">
    <location>
        <begin position="447"/>
        <end position="471"/>
    </location>
</feature>
<feature type="binding site" evidence="1">
    <location>
        <position position="367"/>
    </location>
    <ligand>
        <name>[CaMn4O5] cluster</name>
        <dbReference type="ChEBI" id="CHEBI:189552"/>
    </ligand>
</feature>
<feature type="modified residue" description="N-acetylthreonine" evidence="1">
    <location>
        <position position="15"/>
    </location>
</feature>
<feature type="modified residue" description="Phosphothreonine" evidence="1">
    <location>
        <position position="15"/>
    </location>
</feature>
<dbReference type="EMBL" id="EF380352">
    <property type="protein sequence ID" value="ABQ43256.1"/>
    <property type="molecule type" value="Genomic_DNA"/>
</dbReference>
<dbReference type="RefSeq" id="YP_001294094.1">
    <property type="nucleotide sequence ID" value="NC_009598.1"/>
</dbReference>
<dbReference type="SMR" id="A6MMB8"/>
<dbReference type="GeneID" id="5236538"/>
<dbReference type="GO" id="GO:0009535">
    <property type="term" value="C:chloroplast thylakoid membrane"/>
    <property type="evidence" value="ECO:0007669"/>
    <property type="project" value="UniProtKB-SubCell"/>
</dbReference>
<dbReference type="GO" id="GO:0009523">
    <property type="term" value="C:photosystem II"/>
    <property type="evidence" value="ECO:0007669"/>
    <property type="project" value="UniProtKB-KW"/>
</dbReference>
<dbReference type="GO" id="GO:0016168">
    <property type="term" value="F:chlorophyll binding"/>
    <property type="evidence" value="ECO:0007669"/>
    <property type="project" value="UniProtKB-UniRule"/>
</dbReference>
<dbReference type="GO" id="GO:0045156">
    <property type="term" value="F:electron transporter, transferring electrons within the cyclic electron transport pathway of photosynthesis activity"/>
    <property type="evidence" value="ECO:0007669"/>
    <property type="project" value="InterPro"/>
</dbReference>
<dbReference type="GO" id="GO:0046872">
    <property type="term" value="F:metal ion binding"/>
    <property type="evidence" value="ECO:0007669"/>
    <property type="project" value="UniProtKB-KW"/>
</dbReference>
<dbReference type="GO" id="GO:0009772">
    <property type="term" value="P:photosynthetic electron transport in photosystem II"/>
    <property type="evidence" value="ECO:0007669"/>
    <property type="project" value="InterPro"/>
</dbReference>
<dbReference type="FunFam" id="1.10.10.670:FF:000001">
    <property type="entry name" value="Photosystem II CP43 reaction center protein"/>
    <property type="match status" value="1"/>
</dbReference>
<dbReference type="Gene3D" id="1.10.10.670">
    <property type="entry name" value="photosystem ii from thermosynechococcus elongatus"/>
    <property type="match status" value="1"/>
</dbReference>
<dbReference type="HAMAP" id="MF_01496">
    <property type="entry name" value="PSII_PsbC_CP43"/>
    <property type="match status" value="1"/>
</dbReference>
<dbReference type="InterPro" id="IPR000932">
    <property type="entry name" value="PS_antenna-like"/>
</dbReference>
<dbReference type="InterPro" id="IPR036001">
    <property type="entry name" value="PS_II_antenna-like_sf"/>
</dbReference>
<dbReference type="InterPro" id="IPR005869">
    <property type="entry name" value="PSII_PsbC"/>
</dbReference>
<dbReference type="InterPro" id="IPR044900">
    <property type="entry name" value="PSII_PsbC_sf"/>
</dbReference>
<dbReference type="NCBIfam" id="TIGR01153">
    <property type="entry name" value="psbC"/>
    <property type="match status" value="1"/>
</dbReference>
<dbReference type="Pfam" id="PF00421">
    <property type="entry name" value="PSII"/>
    <property type="match status" value="1"/>
</dbReference>
<dbReference type="SUPFAM" id="SSF161077">
    <property type="entry name" value="Photosystem II antenna protein-like"/>
    <property type="match status" value="1"/>
</dbReference>